<sequence>MTLTKAELADLLFEKVGFNKREAKDMVESFYEEVRIALQNGDGVKLSGFGNFQLRDKPQRPGRNPKTGEEIPITARRVVTFHASQKLKAMVEKNQHGKDNA</sequence>
<name>IHFA_NITMU</name>
<proteinExistence type="inferred from homology"/>
<comment type="function">
    <text evidence="1">This protein is one of the two subunits of integration host factor, a specific DNA-binding protein that functions in genetic recombination as well as in transcriptional and translational control.</text>
</comment>
<comment type="subunit">
    <text evidence="1">Heterodimer of an alpha and a beta chain.</text>
</comment>
<comment type="similarity">
    <text evidence="1">Belongs to the bacterial histone-like protein family.</text>
</comment>
<evidence type="ECO:0000255" key="1">
    <source>
        <dbReference type="HAMAP-Rule" id="MF_00380"/>
    </source>
</evidence>
<evidence type="ECO:0000256" key="2">
    <source>
        <dbReference type="SAM" id="MobiDB-lite"/>
    </source>
</evidence>
<feature type="chain" id="PRO_0000277751" description="Integration host factor subunit alpha">
    <location>
        <begin position="1"/>
        <end position="101"/>
    </location>
</feature>
<feature type="region of interest" description="Disordered" evidence="2">
    <location>
        <begin position="49"/>
        <end position="70"/>
    </location>
</feature>
<reference key="1">
    <citation type="submission" date="2005-08" db="EMBL/GenBank/DDBJ databases">
        <title>Complete sequence of chromosome 1 of Nitrosospira multiformis ATCC 25196.</title>
        <authorList>
            <person name="Copeland A."/>
            <person name="Lucas S."/>
            <person name="Lapidus A."/>
            <person name="Barry K."/>
            <person name="Detter J.C."/>
            <person name="Glavina T."/>
            <person name="Hammon N."/>
            <person name="Israni S."/>
            <person name="Pitluck S."/>
            <person name="Chain P."/>
            <person name="Malfatti S."/>
            <person name="Shin M."/>
            <person name="Vergez L."/>
            <person name="Schmutz J."/>
            <person name="Larimer F."/>
            <person name="Land M."/>
            <person name="Hauser L."/>
            <person name="Kyrpides N."/>
            <person name="Lykidis A."/>
            <person name="Richardson P."/>
        </authorList>
    </citation>
    <scope>NUCLEOTIDE SEQUENCE [LARGE SCALE GENOMIC DNA]</scope>
    <source>
        <strain>ATCC 25196 / NCIMB 11849 / C 71</strain>
    </source>
</reference>
<accession>Q2YBS0</accession>
<gene>
    <name evidence="1" type="primary">ihfA</name>
    <name evidence="1" type="synonym">himA</name>
    <name type="ordered locus">Nmul_A0493</name>
</gene>
<keyword id="KW-0233">DNA recombination</keyword>
<keyword id="KW-0238">DNA-binding</keyword>
<keyword id="KW-1185">Reference proteome</keyword>
<keyword id="KW-0804">Transcription</keyword>
<keyword id="KW-0805">Transcription regulation</keyword>
<keyword id="KW-0810">Translation regulation</keyword>
<organism>
    <name type="scientific">Nitrosospira multiformis (strain ATCC 25196 / NCIMB 11849 / C 71)</name>
    <dbReference type="NCBI Taxonomy" id="323848"/>
    <lineage>
        <taxon>Bacteria</taxon>
        <taxon>Pseudomonadati</taxon>
        <taxon>Pseudomonadota</taxon>
        <taxon>Betaproteobacteria</taxon>
        <taxon>Nitrosomonadales</taxon>
        <taxon>Nitrosomonadaceae</taxon>
        <taxon>Nitrosospira</taxon>
    </lineage>
</organism>
<protein>
    <recommendedName>
        <fullName evidence="1">Integration host factor subunit alpha</fullName>
        <shortName evidence="1">IHF-alpha</shortName>
    </recommendedName>
</protein>
<dbReference type="EMBL" id="CP000103">
    <property type="protein sequence ID" value="ABB73801.1"/>
    <property type="molecule type" value="Genomic_DNA"/>
</dbReference>
<dbReference type="RefSeq" id="WP_011379855.1">
    <property type="nucleotide sequence ID" value="NC_007614.1"/>
</dbReference>
<dbReference type="SMR" id="Q2YBS0"/>
<dbReference type="STRING" id="323848.Nmul_A0493"/>
<dbReference type="KEGG" id="nmu:Nmul_A0493"/>
<dbReference type="eggNOG" id="COG0776">
    <property type="taxonomic scope" value="Bacteria"/>
</dbReference>
<dbReference type="HOGENOM" id="CLU_105066_1_0_4"/>
<dbReference type="OrthoDB" id="9797747at2"/>
<dbReference type="Proteomes" id="UP000002718">
    <property type="component" value="Chromosome"/>
</dbReference>
<dbReference type="GO" id="GO:0005829">
    <property type="term" value="C:cytosol"/>
    <property type="evidence" value="ECO:0007669"/>
    <property type="project" value="TreeGrafter"/>
</dbReference>
<dbReference type="GO" id="GO:0003677">
    <property type="term" value="F:DNA binding"/>
    <property type="evidence" value="ECO:0007669"/>
    <property type="project" value="UniProtKB-UniRule"/>
</dbReference>
<dbReference type="GO" id="GO:0030527">
    <property type="term" value="F:structural constituent of chromatin"/>
    <property type="evidence" value="ECO:0007669"/>
    <property type="project" value="InterPro"/>
</dbReference>
<dbReference type="GO" id="GO:0006310">
    <property type="term" value="P:DNA recombination"/>
    <property type="evidence" value="ECO:0007669"/>
    <property type="project" value="UniProtKB-UniRule"/>
</dbReference>
<dbReference type="GO" id="GO:0009893">
    <property type="term" value="P:positive regulation of metabolic process"/>
    <property type="evidence" value="ECO:0007669"/>
    <property type="project" value="UniProtKB-ARBA"/>
</dbReference>
<dbReference type="GO" id="GO:0006355">
    <property type="term" value="P:regulation of DNA-templated transcription"/>
    <property type="evidence" value="ECO:0007669"/>
    <property type="project" value="UniProtKB-UniRule"/>
</dbReference>
<dbReference type="GO" id="GO:0006417">
    <property type="term" value="P:regulation of translation"/>
    <property type="evidence" value="ECO:0007669"/>
    <property type="project" value="UniProtKB-UniRule"/>
</dbReference>
<dbReference type="CDD" id="cd13835">
    <property type="entry name" value="IHF_A"/>
    <property type="match status" value="1"/>
</dbReference>
<dbReference type="FunFam" id="4.10.520.10:FF:000002">
    <property type="entry name" value="Integration host factor subunit alpha"/>
    <property type="match status" value="1"/>
</dbReference>
<dbReference type="Gene3D" id="4.10.520.10">
    <property type="entry name" value="IHF-like DNA-binding proteins"/>
    <property type="match status" value="1"/>
</dbReference>
<dbReference type="HAMAP" id="MF_00380">
    <property type="entry name" value="IHF_alpha"/>
    <property type="match status" value="1"/>
</dbReference>
<dbReference type="InterPro" id="IPR000119">
    <property type="entry name" value="Hist_DNA-bd"/>
</dbReference>
<dbReference type="InterPro" id="IPR020816">
    <property type="entry name" value="Histone-like_DNA-bd_CS"/>
</dbReference>
<dbReference type="InterPro" id="IPR010992">
    <property type="entry name" value="IHF-like_DNA-bd_dom_sf"/>
</dbReference>
<dbReference type="InterPro" id="IPR005684">
    <property type="entry name" value="IHF_alpha"/>
</dbReference>
<dbReference type="NCBIfam" id="TIGR00987">
    <property type="entry name" value="himA"/>
    <property type="match status" value="1"/>
</dbReference>
<dbReference type="NCBIfam" id="NF001401">
    <property type="entry name" value="PRK00285.1"/>
    <property type="match status" value="1"/>
</dbReference>
<dbReference type="PANTHER" id="PTHR33175">
    <property type="entry name" value="DNA-BINDING PROTEIN HU"/>
    <property type="match status" value="1"/>
</dbReference>
<dbReference type="PANTHER" id="PTHR33175:SF2">
    <property type="entry name" value="INTEGRATION HOST FACTOR SUBUNIT ALPHA"/>
    <property type="match status" value="1"/>
</dbReference>
<dbReference type="Pfam" id="PF00216">
    <property type="entry name" value="Bac_DNA_binding"/>
    <property type="match status" value="1"/>
</dbReference>
<dbReference type="PRINTS" id="PR01727">
    <property type="entry name" value="DNABINDINGHU"/>
</dbReference>
<dbReference type="SMART" id="SM00411">
    <property type="entry name" value="BHL"/>
    <property type="match status" value="1"/>
</dbReference>
<dbReference type="SUPFAM" id="SSF47729">
    <property type="entry name" value="IHF-like DNA-binding proteins"/>
    <property type="match status" value="1"/>
</dbReference>
<dbReference type="PROSITE" id="PS00045">
    <property type="entry name" value="HISTONE_LIKE"/>
    <property type="match status" value="1"/>
</dbReference>